<accession>Q9SMZ3</accession>
<accession>Q058L0</accession>
<protein>
    <recommendedName>
        <fullName>F-box only protein 13</fullName>
    </recommendedName>
</protein>
<keyword id="KW-1185">Reference proteome</keyword>
<evidence type="ECO:0000255" key="1">
    <source>
        <dbReference type="PROSITE-ProRule" id="PRU00080"/>
    </source>
</evidence>
<evidence type="ECO:0000305" key="2"/>
<comment type="sequence caution" evidence="2">
    <conflict type="erroneous gene model prediction">
        <sequence resource="EMBL-CDS" id="CAB36790"/>
    </conflict>
</comment>
<comment type="sequence caution" evidence="2">
    <conflict type="erroneous gene model prediction">
        <sequence resource="EMBL-CDS" id="CAB80033"/>
    </conflict>
</comment>
<feature type="chain" id="PRO_0000273547" description="F-box only protein 13">
    <location>
        <begin position="1"/>
        <end position="457"/>
    </location>
</feature>
<feature type="domain" description="F-box" evidence="1">
    <location>
        <begin position="64"/>
        <end position="110"/>
    </location>
</feature>
<feature type="sequence conflict" description="In Ref. 1; CAB36790/CAB80033." evidence="2" ref="1">
    <original>P</original>
    <variation>L</variation>
    <location>
        <position position="331"/>
    </location>
</feature>
<gene>
    <name type="primary">FBX13</name>
    <name type="ordered locus">At4g33160</name>
    <name type="ORF">F4I10.90</name>
</gene>
<reference key="1">
    <citation type="journal article" date="1999" name="Nature">
        <title>Sequence and analysis of chromosome 4 of the plant Arabidopsis thaliana.</title>
        <authorList>
            <person name="Mayer K.F.X."/>
            <person name="Schueller C."/>
            <person name="Wambutt R."/>
            <person name="Murphy G."/>
            <person name="Volckaert G."/>
            <person name="Pohl T."/>
            <person name="Duesterhoeft A."/>
            <person name="Stiekema W."/>
            <person name="Entian K.-D."/>
            <person name="Terryn N."/>
            <person name="Harris B."/>
            <person name="Ansorge W."/>
            <person name="Brandt P."/>
            <person name="Grivell L.A."/>
            <person name="Rieger M."/>
            <person name="Weichselgartner M."/>
            <person name="de Simone V."/>
            <person name="Obermaier B."/>
            <person name="Mache R."/>
            <person name="Mueller M."/>
            <person name="Kreis M."/>
            <person name="Delseny M."/>
            <person name="Puigdomenech P."/>
            <person name="Watson M."/>
            <person name="Schmidtheini T."/>
            <person name="Reichert B."/>
            <person name="Portetelle D."/>
            <person name="Perez-Alonso M."/>
            <person name="Boutry M."/>
            <person name="Bancroft I."/>
            <person name="Vos P."/>
            <person name="Hoheisel J."/>
            <person name="Zimmermann W."/>
            <person name="Wedler H."/>
            <person name="Ridley P."/>
            <person name="Langham S.-A."/>
            <person name="McCullagh B."/>
            <person name="Bilham L."/>
            <person name="Robben J."/>
            <person name="van der Schueren J."/>
            <person name="Grymonprez B."/>
            <person name="Chuang Y.-J."/>
            <person name="Vandenbussche F."/>
            <person name="Braeken M."/>
            <person name="Weltjens I."/>
            <person name="Voet M."/>
            <person name="Bastiaens I."/>
            <person name="Aert R."/>
            <person name="Defoor E."/>
            <person name="Weitzenegger T."/>
            <person name="Bothe G."/>
            <person name="Ramsperger U."/>
            <person name="Hilbert H."/>
            <person name="Braun M."/>
            <person name="Holzer E."/>
            <person name="Brandt A."/>
            <person name="Peters S."/>
            <person name="van Staveren M."/>
            <person name="Dirkse W."/>
            <person name="Mooijman P."/>
            <person name="Klein Lankhorst R."/>
            <person name="Rose M."/>
            <person name="Hauf J."/>
            <person name="Koetter P."/>
            <person name="Berneiser S."/>
            <person name="Hempel S."/>
            <person name="Feldpausch M."/>
            <person name="Lamberth S."/>
            <person name="Van den Daele H."/>
            <person name="De Keyser A."/>
            <person name="Buysshaert C."/>
            <person name="Gielen J."/>
            <person name="Villarroel R."/>
            <person name="De Clercq R."/>
            <person name="van Montagu M."/>
            <person name="Rogers J."/>
            <person name="Cronin A."/>
            <person name="Quail M.A."/>
            <person name="Bray-Allen S."/>
            <person name="Clark L."/>
            <person name="Doggett J."/>
            <person name="Hall S."/>
            <person name="Kay M."/>
            <person name="Lennard N."/>
            <person name="McLay K."/>
            <person name="Mayes R."/>
            <person name="Pettett A."/>
            <person name="Rajandream M.A."/>
            <person name="Lyne M."/>
            <person name="Benes V."/>
            <person name="Rechmann S."/>
            <person name="Borkova D."/>
            <person name="Bloecker H."/>
            <person name="Scharfe M."/>
            <person name="Grimm M."/>
            <person name="Loehnert T.-H."/>
            <person name="Dose S."/>
            <person name="de Haan M."/>
            <person name="Maarse A.C."/>
            <person name="Schaefer M."/>
            <person name="Mueller-Auer S."/>
            <person name="Gabel C."/>
            <person name="Fuchs M."/>
            <person name="Fartmann B."/>
            <person name="Granderath K."/>
            <person name="Dauner D."/>
            <person name="Herzl A."/>
            <person name="Neumann S."/>
            <person name="Argiriou A."/>
            <person name="Vitale D."/>
            <person name="Liguori R."/>
            <person name="Piravandi E."/>
            <person name="Massenet O."/>
            <person name="Quigley F."/>
            <person name="Clabauld G."/>
            <person name="Muendlein A."/>
            <person name="Felber R."/>
            <person name="Schnabl S."/>
            <person name="Hiller R."/>
            <person name="Schmidt W."/>
            <person name="Lecharny A."/>
            <person name="Aubourg S."/>
            <person name="Chefdor F."/>
            <person name="Cooke R."/>
            <person name="Berger C."/>
            <person name="Monfort A."/>
            <person name="Casacuberta E."/>
            <person name="Gibbons T."/>
            <person name="Weber N."/>
            <person name="Vandenbol M."/>
            <person name="Bargues M."/>
            <person name="Terol J."/>
            <person name="Torres A."/>
            <person name="Perez-Perez A."/>
            <person name="Purnelle B."/>
            <person name="Bent E."/>
            <person name="Johnson S."/>
            <person name="Tacon D."/>
            <person name="Jesse T."/>
            <person name="Heijnen L."/>
            <person name="Schwarz S."/>
            <person name="Scholler P."/>
            <person name="Heber S."/>
            <person name="Francs P."/>
            <person name="Bielke C."/>
            <person name="Frishman D."/>
            <person name="Haase D."/>
            <person name="Lemcke K."/>
            <person name="Mewes H.-W."/>
            <person name="Stocker S."/>
            <person name="Zaccaria P."/>
            <person name="Bevan M."/>
            <person name="Wilson R.K."/>
            <person name="de la Bastide M."/>
            <person name="Habermann K."/>
            <person name="Parnell L."/>
            <person name="Dedhia N."/>
            <person name="Gnoj L."/>
            <person name="Schutz K."/>
            <person name="Huang E."/>
            <person name="Spiegel L."/>
            <person name="Sekhon M."/>
            <person name="Murray J."/>
            <person name="Sheet P."/>
            <person name="Cordes M."/>
            <person name="Abu-Threideh J."/>
            <person name="Stoneking T."/>
            <person name="Kalicki J."/>
            <person name="Graves T."/>
            <person name="Harmon G."/>
            <person name="Edwards J."/>
            <person name="Latreille P."/>
            <person name="Courtney L."/>
            <person name="Cloud J."/>
            <person name="Abbott A."/>
            <person name="Scott K."/>
            <person name="Johnson D."/>
            <person name="Minx P."/>
            <person name="Bentley D."/>
            <person name="Fulton B."/>
            <person name="Miller N."/>
            <person name="Greco T."/>
            <person name="Kemp K."/>
            <person name="Kramer J."/>
            <person name="Fulton L."/>
            <person name="Mardis E."/>
            <person name="Dante M."/>
            <person name="Pepin K."/>
            <person name="Hillier L.W."/>
            <person name="Nelson J."/>
            <person name="Spieth J."/>
            <person name="Ryan E."/>
            <person name="Andrews S."/>
            <person name="Geisel C."/>
            <person name="Layman D."/>
            <person name="Du H."/>
            <person name="Ali J."/>
            <person name="Berghoff A."/>
            <person name="Jones K."/>
            <person name="Drone K."/>
            <person name="Cotton M."/>
            <person name="Joshu C."/>
            <person name="Antonoiu B."/>
            <person name="Zidanic M."/>
            <person name="Strong C."/>
            <person name="Sun H."/>
            <person name="Lamar B."/>
            <person name="Yordan C."/>
            <person name="Ma P."/>
            <person name="Zhong J."/>
            <person name="Preston R."/>
            <person name="Vil D."/>
            <person name="Shekher M."/>
            <person name="Matero A."/>
            <person name="Shah R."/>
            <person name="Swaby I.K."/>
            <person name="O'Shaughnessy A."/>
            <person name="Rodriguez M."/>
            <person name="Hoffman J."/>
            <person name="Till S."/>
            <person name="Granat S."/>
            <person name="Shohdy N."/>
            <person name="Hasegawa A."/>
            <person name="Hameed A."/>
            <person name="Lodhi M."/>
            <person name="Johnson A."/>
            <person name="Chen E."/>
            <person name="Marra M.A."/>
            <person name="Martienssen R."/>
            <person name="McCombie W.R."/>
        </authorList>
    </citation>
    <scope>NUCLEOTIDE SEQUENCE [LARGE SCALE GENOMIC DNA]</scope>
    <source>
        <strain>cv. Columbia</strain>
    </source>
</reference>
<reference key="2">
    <citation type="journal article" date="2017" name="Plant J.">
        <title>Araport11: a complete reannotation of the Arabidopsis thaliana reference genome.</title>
        <authorList>
            <person name="Cheng C.Y."/>
            <person name="Krishnakumar V."/>
            <person name="Chan A.P."/>
            <person name="Thibaud-Nissen F."/>
            <person name="Schobel S."/>
            <person name="Town C.D."/>
        </authorList>
    </citation>
    <scope>GENOME REANNOTATION</scope>
    <source>
        <strain>cv. Columbia</strain>
    </source>
</reference>
<reference key="3">
    <citation type="journal article" date="2004" name="Genome Res.">
        <title>Whole genome sequence comparisons and 'full-length' cDNA sequences: a combined approach to evaluate and improve Arabidopsis genome annotation.</title>
        <authorList>
            <person name="Castelli V."/>
            <person name="Aury J.-M."/>
            <person name="Jaillon O."/>
            <person name="Wincker P."/>
            <person name="Clepet C."/>
            <person name="Menard M."/>
            <person name="Cruaud C."/>
            <person name="Quetier F."/>
            <person name="Scarpelli C."/>
            <person name="Schaechter V."/>
            <person name="Temple G."/>
            <person name="Caboche M."/>
            <person name="Weissenbach J."/>
            <person name="Salanoubat M."/>
        </authorList>
    </citation>
    <scope>NUCLEOTIDE SEQUENCE [LARGE SCALE MRNA] OF 27-457</scope>
    <source>
        <strain>cv. Columbia</strain>
    </source>
</reference>
<reference key="4">
    <citation type="submission" date="2006-10" db="EMBL/GenBank/DDBJ databases">
        <title>Arabidopsis ORF Clones.</title>
        <authorList>
            <person name="Quinitio C."/>
            <person name="Chen H."/>
            <person name="Kim C.J."/>
            <person name="Shinn P."/>
            <person name="Ecker J.R."/>
        </authorList>
    </citation>
    <scope>NUCLEOTIDE SEQUENCE [LARGE SCALE MRNA] OF 41-457</scope>
    <source>
        <strain>cv. Columbia</strain>
    </source>
</reference>
<reference key="5">
    <citation type="journal article" date="2000" name="Trends Plant Sci.">
        <title>F-box proteins in Arabidopsis.</title>
        <authorList>
            <person name="Xiao W."/>
            <person name="Jang J.-C."/>
        </authorList>
    </citation>
    <scope>GENE FAMILY</scope>
    <scope>NOMENCLATURE</scope>
</reference>
<proteinExistence type="evidence at transcript level"/>
<name>FBX13_ARATH</name>
<organism>
    <name type="scientific">Arabidopsis thaliana</name>
    <name type="common">Mouse-ear cress</name>
    <dbReference type="NCBI Taxonomy" id="3702"/>
    <lineage>
        <taxon>Eukaryota</taxon>
        <taxon>Viridiplantae</taxon>
        <taxon>Streptophyta</taxon>
        <taxon>Embryophyta</taxon>
        <taxon>Tracheophyta</taxon>
        <taxon>Spermatophyta</taxon>
        <taxon>Magnoliopsida</taxon>
        <taxon>eudicotyledons</taxon>
        <taxon>Gunneridae</taxon>
        <taxon>Pentapetalae</taxon>
        <taxon>rosids</taxon>
        <taxon>malvids</taxon>
        <taxon>Brassicales</taxon>
        <taxon>Brassicaceae</taxon>
        <taxon>Camelineae</taxon>
        <taxon>Arabidopsis</taxon>
    </lineage>
</organism>
<sequence>MPSSATSTYLLSLKQVSLTASSPLLLQLKDRFFHQPKLLNMGFSTGKRKSRDEEEDRVSFFASEFPMDDLNDDVLERVLSWLPTSCFFRMSSVCKRWKSSQTSKSFKLACSQIPTRDPWFFMIDNDSNSSSFVFDSTENSWKNLNRRDFLHHHRQDFIPVASSGGLLCYRCSISGDFLLRNPLTGSSRDIPSQDNNNNKPLQAVAMTTTTVTPSSYTLVTISGEIPNLSFKIYESNADSWSKDQELESVKNNDSSLHDDYDTDSGTVYFLSKQGNVVVASNNLQRSPSKQYSSVITVTDEAEIVYFLSSYGTIVACDLTKRCFTELPKLLPPFLEYSIDLVECEGTMYVILLSEFFESASLRIWRLDNNREWVQVGMLPPALSHELYGKKGDINCVGGAGNKILVCFNASPPEVYCRYFVYDLVAEEWNELPKCFKDGEAVDFVSALSFQPRIEATV</sequence>
<dbReference type="EMBL" id="AL035525">
    <property type="protein sequence ID" value="CAB36790.1"/>
    <property type="status" value="ALT_SEQ"/>
    <property type="molecule type" value="Genomic_DNA"/>
</dbReference>
<dbReference type="EMBL" id="AL161583">
    <property type="protein sequence ID" value="CAB80033.1"/>
    <property type="status" value="ALT_SEQ"/>
    <property type="molecule type" value="Genomic_DNA"/>
</dbReference>
<dbReference type="EMBL" id="CP002687">
    <property type="protein sequence ID" value="AEE86185.1"/>
    <property type="molecule type" value="Genomic_DNA"/>
</dbReference>
<dbReference type="EMBL" id="BX828112">
    <property type="status" value="NOT_ANNOTATED_CDS"/>
    <property type="molecule type" value="mRNA"/>
</dbReference>
<dbReference type="EMBL" id="BT029208">
    <property type="protein sequence ID" value="ABJ17143.1"/>
    <property type="molecule type" value="mRNA"/>
</dbReference>
<dbReference type="PIR" id="T05196">
    <property type="entry name" value="T05196"/>
</dbReference>
<dbReference type="RefSeq" id="NP_001320121.1">
    <property type="nucleotide sequence ID" value="NM_001342201.1"/>
</dbReference>
<dbReference type="FunCoup" id="Q9SMZ3">
    <property type="interactions" value="344"/>
</dbReference>
<dbReference type="STRING" id="3702.Q9SMZ3"/>
<dbReference type="PaxDb" id="3702-AT4G33160.1"/>
<dbReference type="EnsemblPlants" id="AT4G33160.1">
    <property type="protein sequence ID" value="AT4G33160.1"/>
    <property type="gene ID" value="AT4G33160"/>
</dbReference>
<dbReference type="GeneID" id="829453"/>
<dbReference type="Gramene" id="AT4G33160.1">
    <property type="protein sequence ID" value="AT4G33160.1"/>
    <property type="gene ID" value="AT4G33160"/>
</dbReference>
<dbReference type="KEGG" id="ath:AT4G33160"/>
<dbReference type="Araport" id="AT4G33160"/>
<dbReference type="TAIR" id="AT4G33160"/>
<dbReference type="eggNOG" id="ENOG502QYAK">
    <property type="taxonomic scope" value="Eukaryota"/>
</dbReference>
<dbReference type="HOGENOM" id="CLU_038778_2_1_1"/>
<dbReference type="InParanoid" id="Q9SMZ3"/>
<dbReference type="PRO" id="PR:Q9SMZ3"/>
<dbReference type="Proteomes" id="UP000006548">
    <property type="component" value="Chromosome 4"/>
</dbReference>
<dbReference type="ExpressionAtlas" id="Q9SMZ3">
    <property type="expression patterns" value="baseline and differential"/>
</dbReference>
<dbReference type="CDD" id="cd22157">
    <property type="entry name" value="F-box_AtFBW1-like"/>
    <property type="match status" value="1"/>
</dbReference>
<dbReference type="Gene3D" id="1.20.1280.50">
    <property type="match status" value="1"/>
</dbReference>
<dbReference type="InterPro" id="IPR036047">
    <property type="entry name" value="F-box-like_dom_sf"/>
</dbReference>
<dbReference type="InterPro" id="IPR001810">
    <property type="entry name" value="F-box_dom"/>
</dbReference>
<dbReference type="InterPro" id="IPR011043">
    <property type="entry name" value="Gal_Oxase/kelch_b-propeller"/>
</dbReference>
<dbReference type="InterPro" id="IPR005174">
    <property type="entry name" value="KIB1-4_b-propeller"/>
</dbReference>
<dbReference type="InterPro" id="IPR050796">
    <property type="entry name" value="SCF_F-box_component"/>
</dbReference>
<dbReference type="PANTHER" id="PTHR31672">
    <property type="entry name" value="BNACNNG10540D PROTEIN"/>
    <property type="match status" value="1"/>
</dbReference>
<dbReference type="PANTHER" id="PTHR31672:SF7">
    <property type="entry name" value="F-BOX DOMAIN-CONTAINING PROTEIN"/>
    <property type="match status" value="1"/>
</dbReference>
<dbReference type="Pfam" id="PF03478">
    <property type="entry name" value="Beta-prop_KIB1-4"/>
    <property type="match status" value="1"/>
</dbReference>
<dbReference type="Pfam" id="PF00646">
    <property type="entry name" value="F-box"/>
    <property type="match status" value="1"/>
</dbReference>
<dbReference type="SMART" id="SM00256">
    <property type="entry name" value="FBOX"/>
    <property type="match status" value="1"/>
</dbReference>
<dbReference type="SUPFAM" id="SSF81383">
    <property type="entry name" value="F-box domain"/>
    <property type="match status" value="1"/>
</dbReference>
<dbReference type="SUPFAM" id="SSF50965">
    <property type="entry name" value="Galactose oxidase, central domain"/>
    <property type="match status" value="1"/>
</dbReference>
<dbReference type="PROSITE" id="PS50181">
    <property type="entry name" value="FBOX"/>
    <property type="match status" value="1"/>
</dbReference>